<protein>
    <recommendedName>
        <fullName evidence="1">Small ribosomal subunit protein uS3</fullName>
    </recommendedName>
    <alternativeName>
        <fullName evidence="2">30S ribosomal protein S3</fullName>
    </alternativeName>
</protein>
<gene>
    <name evidence="1" type="primary">rpsC</name>
    <name type="ordered locus">MW2163</name>
</gene>
<reference key="1">
    <citation type="journal article" date="2002" name="Lancet">
        <title>Genome and virulence determinants of high virulence community-acquired MRSA.</title>
        <authorList>
            <person name="Baba T."/>
            <person name="Takeuchi F."/>
            <person name="Kuroda M."/>
            <person name="Yuzawa H."/>
            <person name="Aoki K."/>
            <person name="Oguchi A."/>
            <person name="Nagai Y."/>
            <person name="Iwama N."/>
            <person name="Asano K."/>
            <person name="Naimi T."/>
            <person name="Kuroda H."/>
            <person name="Cui L."/>
            <person name="Yamamoto K."/>
            <person name="Hiramatsu K."/>
        </authorList>
    </citation>
    <scope>NUCLEOTIDE SEQUENCE [LARGE SCALE GENOMIC DNA]</scope>
    <source>
        <strain>MW2</strain>
    </source>
</reference>
<keyword id="KW-0002">3D-structure</keyword>
<keyword id="KW-0687">Ribonucleoprotein</keyword>
<keyword id="KW-0689">Ribosomal protein</keyword>
<keyword id="KW-0694">RNA-binding</keyword>
<keyword id="KW-0699">rRNA-binding</keyword>
<accession>P66554</accession>
<accession>Q99S27</accession>
<proteinExistence type="evidence at protein level"/>
<feature type="chain" id="PRO_0000130202" description="Small ribosomal subunit protein uS3">
    <location>
        <begin position="1"/>
        <end position="217"/>
    </location>
</feature>
<feature type="domain" description="KH type-2" evidence="1">
    <location>
        <begin position="38"/>
        <end position="106"/>
    </location>
</feature>
<evidence type="ECO:0000255" key="1">
    <source>
        <dbReference type="HAMAP-Rule" id="MF_01309"/>
    </source>
</evidence>
<evidence type="ECO:0000305" key="2"/>
<organism>
    <name type="scientific">Staphylococcus aureus (strain MW2)</name>
    <dbReference type="NCBI Taxonomy" id="196620"/>
    <lineage>
        <taxon>Bacteria</taxon>
        <taxon>Bacillati</taxon>
        <taxon>Bacillota</taxon>
        <taxon>Bacilli</taxon>
        <taxon>Bacillales</taxon>
        <taxon>Staphylococcaceae</taxon>
        <taxon>Staphylococcus</taxon>
    </lineage>
</organism>
<dbReference type="EMBL" id="BA000033">
    <property type="protein sequence ID" value="BAB96028.1"/>
    <property type="molecule type" value="Genomic_DNA"/>
</dbReference>
<dbReference type="RefSeq" id="WP_000529877.1">
    <property type="nucleotide sequence ID" value="NC_003923.1"/>
</dbReference>
<dbReference type="PDB" id="8Y38">
    <property type="method" value="EM"/>
    <property type="resolution" value="2.58 A"/>
    <property type="chains" value="c=1-217"/>
</dbReference>
<dbReference type="PDB" id="8Y39">
    <property type="method" value="EM"/>
    <property type="resolution" value="3.60 A"/>
    <property type="chains" value="c=1-217"/>
</dbReference>
<dbReference type="PDBsum" id="8Y38"/>
<dbReference type="PDBsum" id="8Y39"/>
<dbReference type="EMDB" id="EMD-38875"/>
<dbReference type="EMDB" id="EMD-38876"/>
<dbReference type="SMR" id="P66554"/>
<dbReference type="GeneID" id="98346556"/>
<dbReference type="KEGG" id="sam:MW2163"/>
<dbReference type="HOGENOM" id="CLU_058591_0_2_9"/>
<dbReference type="GO" id="GO:0022627">
    <property type="term" value="C:cytosolic small ribosomal subunit"/>
    <property type="evidence" value="ECO:0007669"/>
    <property type="project" value="TreeGrafter"/>
</dbReference>
<dbReference type="GO" id="GO:0003729">
    <property type="term" value="F:mRNA binding"/>
    <property type="evidence" value="ECO:0007669"/>
    <property type="project" value="UniProtKB-UniRule"/>
</dbReference>
<dbReference type="GO" id="GO:0019843">
    <property type="term" value="F:rRNA binding"/>
    <property type="evidence" value="ECO:0007669"/>
    <property type="project" value="UniProtKB-UniRule"/>
</dbReference>
<dbReference type="GO" id="GO:0003735">
    <property type="term" value="F:structural constituent of ribosome"/>
    <property type="evidence" value="ECO:0007669"/>
    <property type="project" value="InterPro"/>
</dbReference>
<dbReference type="GO" id="GO:0006412">
    <property type="term" value="P:translation"/>
    <property type="evidence" value="ECO:0007669"/>
    <property type="project" value="UniProtKB-UniRule"/>
</dbReference>
<dbReference type="CDD" id="cd02412">
    <property type="entry name" value="KH-II_30S_S3"/>
    <property type="match status" value="1"/>
</dbReference>
<dbReference type="FunFam" id="3.30.1140.32:FF:000001">
    <property type="entry name" value="30S ribosomal protein S3"/>
    <property type="match status" value="1"/>
</dbReference>
<dbReference type="FunFam" id="3.30.300.20:FF:000001">
    <property type="entry name" value="30S ribosomal protein S3"/>
    <property type="match status" value="1"/>
</dbReference>
<dbReference type="Gene3D" id="3.30.300.20">
    <property type="match status" value="1"/>
</dbReference>
<dbReference type="Gene3D" id="3.30.1140.32">
    <property type="entry name" value="Ribosomal protein S3, C-terminal domain"/>
    <property type="match status" value="1"/>
</dbReference>
<dbReference type="HAMAP" id="MF_01309_B">
    <property type="entry name" value="Ribosomal_uS3_B"/>
    <property type="match status" value="1"/>
</dbReference>
<dbReference type="InterPro" id="IPR004087">
    <property type="entry name" value="KH_dom"/>
</dbReference>
<dbReference type="InterPro" id="IPR015946">
    <property type="entry name" value="KH_dom-like_a/b"/>
</dbReference>
<dbReference type="InterPro" id="IPR004044">
    <property type="entry name" value="KH_dom_type_2"/>
</dbReference>
<dbReference type="InterPro" id="IPR009019">
    <property type="entry name" value="KH_sf_prok-type"/>
</dbReference>
<dbReference type="InterPro" id="IPR036419">
    <property type="entry name" value="Ribosomal_S3_C_sf"/>
</dbReference>
<dbReference type="InterPro" id="IPR005704">
    <property type="entry name" value="Ribosomal_uS3_bac-typ"/>
</dbReference>
<dbReference type="InterPro" id="IPR001351">
    <property type="entry name" value="Ribosomal_uS3_C"/>
</dbReference>
<dbReference type="InterPro" id="IPR018280">
    <property type="entry name" value="Ribosomal_uS3_CS"/>
</dbReference>
<dbReference type="NCBIfam" id="TIGR01009">
    <property type="entry name" value="rpsC_bact"/>
    <property type="match status" value="1"/>
</dbReference>
<dbReference type="PANTHER" id="PTHR11760">
    <property type="entry name" value="30S/40S RIBOSOMAL PROTEIN S3"/>
    <property type="match status" value="1"/>
</dbReference>
<dbReference type="PANTHER" id="PTHR11760:SF19">
    <property type="entry name" value="SMALL RIBOSOMAL SUBUNIT PROTEIN US3C"/>
    <property type="match status" value="1"/>
</dbReference>
<dbReference type="Pfam" id="PF07650">
    <property type="entry name" value="KH_2"/>
    <property type="match status" value="1"/>
</dbReference>
<dbReference type="Pfam" id="PF00189">
    <property type="entry name" value="Ribosomal_S3_C"/>
    <property type="match status" value="1"/>
</dbReference>
<dbReference type="SMART" id="SM00322">
    <property type="entry name" value="KH"/>
    <property type="match status" value="1"/>
</dbReference>
<dbReference type="SUPFAM" id="SSF54814">
    <property type="entry name" value="Prokaryotic type KH domain (KH-domain type II)"/>
    <property type="match status" value="1"/>
</dbReference>
<dbReference type="SUPFAM" id="SSF54821">
    <property type="entry name" value="Ribosomal protein S3 C-terminal domain"/>
    <property type="match status" value="1"/>
</dbReference>
<dbReference type="PROSITE" id="PS50823">
    <property type="entry name" value="KH_TYPE_2"/>
    <property type="match status" value="1"/>
</dbReference>
<dbReference type="PROSITE" id="PS00548">
    <property type="entry name" value="RIBOSOMAL_S3"/>
    <property type="match status" value="1"/>
</dbReference>
<comment type="function">
    <text evidence="1">Binds the lower part of the 30S subunit head. Binds mRNA in the 70S ribosome, positioning it for translation.</text>
</comment>
<comment type="subunit">
    <text evidence="1">Part of the 30S ribosomal subunit. Forms a tight complex with proteins S10 and S14.</text>
</comment>
<comment type="similarity">
    <text evidence="1">Belongs to the universal ribosomal protein uS3 family.</text>
</comment>
<sequence length="217" mass="24100">MGQKINPIGLRVGIIRDWEAKWYAEKDFASLLHEDLKIRKFIDNELKEASVSHVEIERAANRINIAIHTGKPGMVIGKGGSEIEKLRNKLNALTDKKVHINVIEIKKVDLDARLVAENIARQLENRASFRRVQKQAITRAMKLGAKGIKTQVSGRLGGADIARAEQYSEGTVPLHTLRADIDYAHAEADTTYGKLGVKVWIYRGEVLPTKNTSGGGK</sequence>
<name>RS3_STAAW</name>